<sequence>MLAELGACLLLAMVLLDSDPGTQAMEGVKCGGVLSAPSGNFSSPNFPSLYPYNTECSWLIVVAEGSSVLLTFHAFDLEYHDTCGFDFLEIYNGASGDKGNLLGRFCGQVPPPPFTSSWHVMSVVFHSDKHVASRGFSAGYQKDVCGGVLTGLSGVLSSPEYPNNYPNNVECHWLIRASGPAAVKLVFVDFQVEGSDECMYDYVAVLGAPGPAHGHHYCGRTRPPTFVSLGHELQVVFKSDFNIGGRGFKAHYFSGECQEVFTAVRGNFSSPQYPGAYPNNIRCHWTIRLPPGYRVKVFILDLGLEEPNSLTRTCDFDHLAAFDGASEEAQLLGKWCGHHLPPPVTSSRNQVLLLLHTDRSTSGRGFSVAYIGVVPMNVSCSRTDFQILISAQALAPLERTKVYLGSRSCAAQEVGSNFRIQARFDTCGTESQRRNNTSVIVSVLYIDFSTAGHDDIHEYEVRCEPRRKEASAHLLSGSDLLGPYAATAEHLQEAPPGDEAEVLEGPGTMVTQDTSDIVFLGLCILAGVLMIIAIVVLMLL</sequence>
<reference key="1">
    <citation type="journal article" date="2005" name="Science">
        <title>The transcriptional landscape of the mammalian genome.</title>
        <authorList>
            <person name="Carninci P."/>
            <person name="Kasukawa T."/>
            <person name="Katayama S."/>
            <person name="Gough J."/>
            <person name="Frith M.C."/>
            <person name="Maeda N."/>
            <person name="Oyama R."/>
            <person name="Ravasi T."/>
            <person name="Lenhard B."/>
            <person name="Wells C."/>
            <person name="Kodzius R."/>
            <person name="Shimokawa K."/>
            <person name="Bajic V.B."/>
            <person name="Brenner S.E."/>
            <person name="Batalov S."/>
            <person name="Forrest A.R."/>
            <person name="Zavolan M."/>
            <person name="Davis M.J."/>
            <person name="Wilming L.G."/>
            <person name="Aidinis V."/>
            <person name="Allen J.E."/>
            <person name="Ambesi-Impiombato A."/>
            <person name="Apweiler R."/>
            <person name="Aturaliya R.N."/>
            <person name="Bailey T.L."/>
            <person name="Bansal M."/>
            <person name="Baxter L."/>
            <person name="Beisel K.W."/>
            <person name="Bersano T."/>
            <person name="Bono H."/>
            <person name="Chalk A.M."/>
            <person name="Chiu K.P."/>
            <person name="Choudhary V."/>
            <person name="Christoffels A."/>
            <person name="Clutterbuck D.R."/>
            <person name="Crowe M.L."/>
            <person name="Dalla E."/>
            <person name="Dalrymple B.P."/>
            <person name="de Bono B."/>
            <person name="Della Gatta G."/>
            <person name="di Bernardo D."/>
            <person name="Down T."/>
            <person name="Engstrom P."/>
            <person name="Fagiolini M."/>
            <person name="Faulkner G."/>
            <person name="Fletcher C.F."/>
            <person name="Fukushima T."/>
            <person name="Furuno M."/>
            <person name="Futaki S."/>
            <person name="Gariboldi M."/>
            <person name="Georgii-Hemming P."/>
            <person name="Gingeras T.R."/>
            <person name="Gojobori T."/>
            <person name="Green R.E."/>
            <person name="Gustincich S."/>
            <person name="Harbers M."/>
            <person name="Hayashi Y."/>
            <person name="Hensch T.K."/>
            <person name="Hirokawa N."/>
            <person name="Hill D."/>
            <person name="Huminiecki L."/>
            <person name="Iacono M."/>
            <person name="Ikeo K."/>
            <person name="Iwama A."/>
            <person name="Ishikawa T."/>
            <person name="Jakt M."/>
            <person name="Kanapin A."/>
            <person name="Katoh M."/>
            <person name="Kawasawa Y."/>
            <person name="Kelso J."/>
            <person name="Kitamura H."/>
            <person name="Kitano H."/>
            <person name="Kollias G."/>
            <person name="Krishnan S.P."/>
            <person name="Kruger A."/>
            <person name="Kummerfeld S.K."/>
            <person name="Kurochkin I.V."/>
            <person name="Lareau L.F."/>
            <person name="Lazarevic D."/>
            <person name="Lipovich L."/>
            <person name="Liu J."/>
            <person name="Liuni S."/>
            <person name="McWilliam S."/>
            <person name="Madan Babu M."/>
            <person name="Madera M."/>
            <person name="Marchionni L."/>
            <person name="Matsuda H."/>
            <person name="Matsuzawa S."/>
            <person name="Miki H."/>
            <person name="Mignone F."/>
            <person name="Miyake S."/>
            <person name="Morris K."/>
            <person name="Mottagui-Tabar S."/>
            <person name="Mulder N."/>
            <person name="Nakano N."/>
            <person name="Nakauchi H."/>
            <person name="Ng P."/>
            <person name="Nilsson R."/>
            <person name="Nishiguchi S."/>
            <person name="Nishikawa S."/>
            <person name="Nori F."/>
            <person name="Ohara O."/>
            <person name="Okazaki Y."/>
            <person name="Orlando V."/>
            <person name="Pang K.C."/>
            <person name="Pavan W.J."/>
            <person name="Pavesi G."/>
            <person name="Pesole G."/>
            <person name="Petrovsky N."/>
            <person name="Piazza S."/>
            <person name="Reed J."/>
            <person name="Reid J.F."/>
            <person name="Ring B.Z."/>
            <person name="Ringwald M."/>
            <person name="Rost B."/>
            <person name="Ruan Y."/>
            <person name="Salzberg S.L."/>
            <person name="Sandelin A."/>
            <person name="Schneider C."/>
            <person name="Schoenbach C."/>
            <person name="Sekiguchi K."/>
            <person name="Semple C.A."/>
            <person name="Seno S."/>
            <person name="Sessa L."/>
            <person name="Sheng Y."/>
            <person name="Shibata Y."/>
            <person name="Shimada H."/>
            <person name="Shimada K."/>
            <person name="Silva D."/>
            <person name="Sinclair B."/>
            <person name="Sperling S."/>
            <person name="Stupka E."/>
            <person name="Sugiura K."/>
            <person name="Sultana R."/>
            <person name="Takenaka Y."/>
            <person name="Taki K."/>
            <person name="Tammoja K."/>
            <person name="Tan S.L."/>
            <person name="Tang S."/>
            <person name="Taylor M.S."/>
            <person name="Tegner J."/>
            <person name="Teichmann S.A."/>
            <person name="Ueda H.R."/>
            <person name="van Nimwegen E."/>
            <person name="Verardo R."/>
            <person name="Wei C.L."/>
            <person name="Yagi K."/>
            <person name="Yamanishi H."/>
            <person name="Zabarovsky E."/>
            <person name="Zhu S."/>
            <person name="Zimmer A."/>
            <person name="Hide W."/>
            <person name="Bult C."/>
            <person name="Grimmond S.M."/>
            <person name="Teasdale R.D."/>
            <person name="Liu E.T."/>
            <person name="Brusic V."/>
            <person name="Quackenbush J."/>
            <person name="Wahlestedt C."/>
            <person name="Mattick J.S."/>
            <person name="Hume D.A."/>
            <person name="Kai C."/>
            <person name="Sasaki D."/>
            <person name="Tomaru Y."/>
            <person name="Fukuda S."/>
            <person name="Kanamori-Katayama M."/>
            <person name="Suzuki M."/>
            <person name="Aoki J."/>
            <person name="Arakawa T."/>
            <person name="Iida J."/>
            <person name="Imamura K."/>
            <person name="Itoh M."/>
            <person name="Kato T."/>
            <person name="Kawaji H."/>
            <person name="Kawagashira N."/>
            <person name="Kawashima T."/>
            <person name="Kojima M."/>
            <person name="Kondo S."/>
            <person name="Konno H."/>
            <person name="Nakano K."/>
            <person name="Ninomiya N."/>
            <person name="Nishio T."/>
            <person name="Okada M."/>
            <person name="Plessy C."/>
            <person name="Shibata K."/>
            <person name="Shiraki T."/>
            <person name="Suzuki S."/>
            <person name="Tagami M."/>
            <person name="Waki K."/>
            <person name="Watahiki A."/>
            <person name="Okamura-Oho Y."/>
            <person name="Suzuki H."/>
            <person name="Kawai J."/>
            <person name="Hayashizaki Y."/>
        </authorList>
    </citation>
    <scope>NUCLEOTIDE SEQUENCE [LARGE SCALE MRNA] (ISOFORM 2)</scope>
    <source>
        <strain>C57BL/6J</strain>
        <tissue>Embryo</tissue>
    </source>
</reference>
<reference key="2">
    <citation type="journal article" date="2009" name="PLoS Biol.">
        <title>Lineage-specific biology revealed by a finished genome assembly of the mouse.</title>
        <authorList>
            <person name="Church D.M."/>
            <person name="Goodstadt L."/>
            <person name="Hillier L.W."/>
            <person name="Zody M.C."/>
            <person name="Goldstein S."/>
            <person name="She X."/>
            <person name="Bult C.J."/>
            <person name="Agarwala R."/>
            <person name="Cherry J.L."/>
            <person name="DiCuccio M."/>
            <person name="Hlavina W."/>
            <person name="Kapustin Y."/>
            <person name="Meric P."/>
            <person name="Maglott D."/>
            <person name="Birtle Z."/>
            <person name="Marques A.C."/>
            <person name="Graves T."/>
            <person name="Zhou S."/>
            <person name="Teague B."/>
            <person name="Potamousis K."/>
            <person name="Churas C."/>
            <person name="Place M."/>
            <person name="Herschleb J."/>
            <person name="Runnheim R."/>
            <person name="Forrest D."/>
            <person name="Amos-Landgraf J."/>
            <person name="Schwartz D.C."/>
            <person name="Cheng Z."/>
            <person name="Lindblad-Toh K."/>
            <person name="Eichler E.E."/>
            <person name="Ponting C.P."/>
        </authorList>
    </citation>
    <scope>NUCLEOTIDE SEQUENCE [LARGE SCALE GENOMIC DNA]</scope>
    <source>
        <strain>C57BL/6J</strain>
    </source>
</reference>
<name>CDCP2_MOUSE</name>
<dbReference type="EMBL" id="AK050720">
    <property type="protein sequence ID" value="BAC34392.1"/>
    <property type="molecule type" value="mRNA"/>
</dbReference>
<dbReference type="EMBL" id="AL607132">
    <property type="status" value="NOT_ANNOTATED_CDS"/>
    <property type="molecule type" value="Genomic_DNA"/>
</dbReference>
<dbReference type="EMBL" id="AL645723">
    <property type="status" value="NOT_ANNOTATED_CDS"/>
    <property type="molecule type" value="Genomic_DNA"/>
</dbReference>
<dbReference type="CCDS" id="CCDS18430.1">
    <molecule id="Q8BQH6-1"/>
</dbReference>
<dbReference type="RefSeq" id="NP_766461.1">
    <molecule id="Q8BQH6-1"/>
    <property type="nucleotide sequence ID" value="NM_172873.3"/>
</dbReference>
<dbReference type="RefSeq" id="XP_030109426.1">
    <molecule id="Q8BQH6-2"/>
    <property type="nucleotide sequence ID" value="XM_030253566.1"/>
</dbReference>
<dbReference type="SMR" id="Q8BQH6"/>
<dbReference type="STRING" id="10090.ENSMUSP00000061401"/>
<dbReference type="GlyCosmos" id="Q8BQH6">
    <property type="glycosylation" value="2 sites, No reported glycans"/>
</dbReference>
<dbReference type="GlyGen" id="Q8BQH6">
    <property type="glycosylation" value="5 sites"/>
</dbReference>
<dbReference type="PaxDb" id="10090-ENSMUSP00000061401"/>
<dbReference type="Antibodypedia" id="33162">
    <property type="antibodies" value="15 antibodies from 9 providers"/>
</dbReference>
<dbReference type="DNASU" id="242603"/>
<dbReference type="Ensembl" id="ENSMUST00000062495.3">
    <molecule id="Q8BQH6-1"/>
    <property type="protein sequence ID" value="ENSMUSP00000061401.3"/>
    <property type="gene ID" value="ENSMUSG00000047636.4"/>
</dbReference>
<dbReference type="Ensembl" id="ENSMUST00000221740.2">
    <molecule id="Q8BQH6-2"/>
    <property type="protein sequence ID" value="ENSMUSP00000152236.2"/>
    <property type="gene ID" value="ENSMUSG00000047636.4"/>
</dbReference>
<dbReference type="GeneID" id="242603"/>
<dbReference type="KEGG" id="mmu:242603"/>
<dbReference type="UCSC" id="uc008tzf.1">
    <molecule id="Q8BQH6-2"/>
    <property type="organism name" value="mouse"/>
</dbReference>
<dbReference type="AGR" id="MGI:3045328"/>
<dbReference type="CTD" id="200008"/>
<dbReference type="MGI" id="MGI:3045328">
    <property type="gene designation" value="Cdcp2"/>
</dbReference>
<dbReference type="VEuPathDB" id="HostDB:ENSMUSG00000047636"/>
<dbReference type="eggNOG" id="ENOG502QVE6">
    <property type="taxonomic scope" value="Eukaryota"/>
</dbReference>
<dbReference type="GeneTree" id="ENSGT00940000158291"/>
<dbReference type="HOGENOM" id="CLU_015228_7_1_1"/>
<dbReference type="InParanoid" id="Q8BQH6"/>
<dbReference type="OMA" id="QQNVQEY"/>
<dbReference type="OrthoDB" id="10009301at2759"/>
<dbReference type="PhylomeDB" id="Q8BQH6"/>
<dbReference type="TreeFam" id="TF316506"/>
<dbReference type="BioGRID-ORCS" id="242603">
    <property type="hits" value="1 hit in 76 CRISPR screens"/>
</dbReference>
<dbReference type="PRO" id="PR:Q8BQH6"/>
<dbReference type="Proteomes" id="UP000000589">
    <property type="component" value="Chromosome 4"/>
</dbReference>
<dbReference type="RNAct" id="Q8BQH6">
    <property type="molecule type" value="protein"/>
</dbReference>
<dbReference type="Bgee" id="ENSMUSG00000047636">
    <property type="expression patterns" value="Expressed in mesodermal cell in embryo and 3 other cell types or tissues"/>
</dbReference>
<dbReference type="ExpressionAtlas" id="Q8BQH6">
    <property type="expression patterns" value="baseline and differential"/>
</dbReference>
<dbReference type="GO" id="GO:0016020">
    <property type="term" value="C:membrane"/>
    <property type="evidence" value="ECO:0007669"/>
    <property type="project" value="UniProtKB-SubCell"/>
</dbReference>
<dbReference type="CDD" id="cd00041">
    <property type="entry name" value="CUB"/>
    <property type="match status" value="3"/>
</dbReference>
<dbReference type="FunFam" id="2.60.120.290:FF:000013">
    <property type="entry name" value="Membrane frizzled-related protein"/>
    <property type="match status" value="3"/>
</dbReference>
<dbReference type="Gene3D" id="2.60.120.290">
    <property type="entry name" value="Spermadhesin, CUB domain"/>
    <property type="match status" value="3"/>
</dbReference>
<dbReference type="Gene3D" id="2.60.40.3210">
    <property type="entry name" value="Zona pellucida, ZP-N domain"/>
    <property type="match status" value="1"/>
</dbReference>
<dbReference type="InterPro" id="IPR000859">
    <property type="entry name" value="CUB_dom"/>
</dbReference>
<dbReference type="InterPro" id="IPR035914">
    <property type="entry name" value="Sperma_CUB_dom_sf"/>
</dbReference>
<dbReference type="InterPro" id="IPR055356">
    <property type="entry name" value="ZP-N"/>
</dbReference>
<dbReference type="PANTHER" id="PTHR24251:SF47">
    <property type="entry name" value="CUB DOMAIN-CONTAINING PROTEIN 2"/>
    <property type="match status" value="1"/>
</dbReference>
<dbReference type="PANTHER" id="PTHR24251">
    <property type="entry name" value="OVOCHYMASE-RELATED"/>
    <property type="match status" value="1"/>
</dbReference>
<dbReference type="Pfam" id="PF00431">
    <property type="entry name" value="CUB"/>
    <property type="match status" value="3"/>
</dbReference>
<dbReference type="Pfam" id="PF23344">
    <property type="entry name" value="ZP-N"/>
    <property type="match status" value="1"/>
</dbReference>
<dbReference type="SMART" id="SM00042">
    <property type="entry name" value="CUB"/>
    <property type="match status" value="3"/>
</dbReference>
<dbReference type="SUPFAM" id="SSF49854">
    <property type="entry name" value="Spermadhesin, CUB domain"/>
    <property type="match status" value="3"/>
</dbReference>
<dbReference type="PROSITE" id="PS01180">
    <property type="entry name" value="CUB"/>
    <property type="match status" value="3"/>
</dbReference>
<protein>
    <recommendedName>
        <fullName>CUB domain-containing protein 2</fullName>
    </recommendedName>
</protein>
<keyword id="KW-0025">Alternative splicing</keyword>
<keyword id="KW-1015">Disulfide bond</keyword>
<keyword id="KW-0325">Glycoprotein</keyword>
<keyword id="KW-0472">Membrane</keyword>
<keyword id="KW-1185">Reference proteome</keyword>
<keyword id="KW-0677">Repeat</keyword>
<keyword id="KW-0732">Signal</keyword>
<keyword id="KW-0812">Transmembrane</keyword>
<keyword id="KW-1133">Transmembrane helix</keyword>
<gene>
    <name type="primary">Cdcp2</name>
</gene>
<organism>
    <name type="scientific">Mus musculus</name>
    <name type="common">Mouse</name>
    <dbReference type="NCBI Taxonomy" id="10090"/>
    <lineage>
        <taxon>Eukaryota</taxon>
        <taxon>Metazoa</taxon>
        <taxon>Chordata</taxon>
        <taxon>Craniata</taxon>
        <taxon>Vertebrata</taxon>
        <taxon>Euteleostomi</taxon>
        <taxon>Mammalia</taxon>
        <taxon>Eutheria</taxon>
        <taxon>Euarchontoglires</taxon>
        <taxon>Glires</taxon>
        <taxon>Rodentia</taxon>
        <taxon>Myomorpha</taxon>
        <taxon>Muroidea</taxon>
        <taxon>Muridae</taxon>
        <taxon>Murinae</taxon>
        <taxon>Mus</taxon>
        <taxon>Mus</taxon>
    </lineage>
</organism>
<accession>Q8BQH6</accession>
<accession>A0A1Y7VJ18</accession>
<evidence type="ECO:0000255" key="1"/>
<evidence type="ECO:0000255" key="2">
    <source>
        <dbReference type="PROSITE-ProRule" id="PRU00059"/>
    </source>
</evidence>
<evidence type="ECO:0000305" key="3"/>
<comment type="subcellular location">
    <subcellularLocation>
        <location evidence="1">Membrane</location>
        <topology evidence="1">Single-pass type I membrane protein</topology>
    </subcellularLocation>
</comment>
<comment type="alternative products">
    <event type="alternative splicing"/>
    <isoform>
        <id>Q8BQH6-2</id>
        <name>1</name>
        <sequence type="displayed"/>
    </isoform>
    <isoform>
        <id>Q8BQH6-1</id>
        <name>2</name>
        <sequence type="described" ref="VSP_062378 VSP_062379"/>
    </isoform>
</comment>
<feature type="signal peptide" evidence="1">
    <location>
        <begin position="1"/>
        <end position="24"/>
    </location>
</feature>
<feature type="chain" id="PRO_0000305072" description="CUB domain-containing protein 2">
    <location>
        <begin position="25"/>
        <end position="540"/>
    </location>
</feature>
<feature type="topological domain" description="Extracellular" evidence="3">
    <location>
        <begin position="25"/>
        <end position="516"/>
    </location>
</feature>
<feature type="transmembrane region" description="Helical" evidence="1">
    <location>
        <begin position="517"/>
        <end position="537"/>
    </location>
</feature>
<feature type="topological domain" description="Cytoplasmic" evidence="3">
    <location>
        <begin position="538"/>
        <end position="540"/>
    </location>
</feature>
<feature type="domain" description="CUB 1" evidence="2">
    <location>
        <begin position="30"/>
        <end position="143"/>
    </location>
</feature>
<feature type="domain" description="CUB 2" evidence="2">
    <location>
        <begin position="145"/>
        <end position="255"/>
    </location>
</feature>
<feature type="domain" description="CUB 3" evidence="2">
    <location>
        <begin position="257"/>
        <end position="373"/>
    </location>
</feature>
<feature type="glycosylation site" description="N-linked (GlcNAc...) asparagine" evidence="1">
    <location>
        <position position="40"/>
    </location>
</feature>
<feature type="glycosylation site" description="N-linked (GlcNAc...) asparagine" evidence="1">
    <location>
        <position position="267"/>
    </location>
</feature>
<feature type="glycosylation site" description="N-linked (GlcNAc...) asparagine" evidence="1">
    <location>
        <position position="377"/>
    </location>
</feature>
<feature type="glycosylation site" description="N-linked (GlcNAc...) asparagine" evidence="1">
    <location>
        <position position="435"/>
    </location>
</feature>
<feature type="glycosylation site" description="N-linked (GlcNAc...) asparagine" evidence="1">
    <location>
        <position position="436"/>
    </location>
</feature>
<feature type="disulfide bond" evidence="2">
    <location>
        <begin position="30"/>
        <end position="56"/>
    </location>
</feature>
<feature type="disulfide bond" evidence="2">
    <location>
        <begin position="83"/>
        <end position="106"/>
    </location>
</feature>
<feature type="disulfide bond" evidence="2">
    <location>
        <begin position="145"/>
        <end position="171"/>
    </location>
</feature>
<feature type="disulfide bond" evidence="2">
    <location>
        <begin position="198"/>
        <end position="218"/>
    </location>
</feature>
<feature type="disulfide bond" evidence="2">
    <location>
        <begin position="257"/>
        <end position="283"/>
    </location>
</feature>
<feature type="disulfide bond" evidence="2">
    <location>
        <begin position="314"/>
        <end position="336"/>
    </location>
</feature>
<feature type="splice variant" id="VSP_062378" description="In isoform 2.">
    <original>VVPMNVSCSRTDFQILISAQALAPLERTKVYLGSRSCAAQEVGSNFRIQARFDTC</original>
    <variation>GQLGVCPWELCGPFLCPLRHSPSTDSSRPHSVAYPGDLGGHSSTALIYFHCHLFS</variation>
    <location>
        <begin position="373"/>
        <end position="427"/>
    </location>
</feature>
<feature type="splice variant" id="VSP_062379" description="In isoform 2.">
    <location>
        <begin position="428"/>
        <end position="540"/>
    </location>
</feature>
<proteinExistence type="evidence at transcript level"/>